<dbReference type="EMBL" id="AH005830">
    <property type="protein sequence ID" value="AAB97752.1"/>
    <property type="molecule type" value="Genomic_DNA"/>
</dbReference>
<dbReference type="SMR" id="O46578"/>
<dbReference type="STRING" id="9593.ENSGGOP00000009806"/>
<dbReference type="eggNOG" id="KOG4075">
    <property type="taxonomic scope" value="Eukaryota"/>
</dbReference>
<dbReference type="HOGENOM" id="CLU_117340_1_0_1"/>
<dbReference type="InParanoid" id="O46578"/>
<dbReference type="UniPathway" id="UPA00705"/>
<dbReference type="Proteomes" id="UP000001519">
    <property type="component" value="Unplaced"/>
</dbReference>
<dbReference type="GO" id="GO:0005743">
    <property type="term" value="C:mitochondrial inner membrane"/>
    <property type="evidence" value="ECO:0000250"/>
    <property type="project" value="UniProtKB"/>
</dbReference>
<dbReference type="GO" id="GO:0045277">
    <property type="term" value="C:respiratory chain complex IV"/>
    <property type="evidence" value="ECO:0000318"/>
    <property type="project" value="GO_Central"/>
</dbReference>
<dbReference type="GO" id="GO:0006123">
    <property type="term" value="P:mitochondrial electron transport, cytochrome c to oxygen"/>
    <property type="evidence" value="ECO:0000318"/>
    <property type="project" value="GO_Central"/>
</dbReference>
<dbReference type="CDD" id="cd00922">
    <property type="entry name" value="Cyt_c_Oxidase_IV"/>
    <property type="match status" value="1"/>
</dbReference>
<dbReference type="FunFam" id="1.10.442.10:FF:000001">
    <property type="entry name" value="Cytochrome c oxidase subunit 4 isoform 1"/>
    <property type="match status" value="1"/>
</dbReference>
<dbReference type="Gene3D" id="1.10.442.10">
    <property type="entry name" value="Cytochrome c oxidase subunit IV"/>
    <property type="match status" value="1"/>
</dbReference>
<dbReference type="InterPro" id="IPR013288">
    <property type="entry name" value="Cyt_c_oxidase_su4"/>
</dbReference>
<dbReference type="InterPro" id="IPR004203">
    <property type="entry name" value="Cyt_c_oxidase_su4_fam"/>
</dbReference>
<dbReference type="InterPro" id="IPR036639">
    <property type="entry name" value="Cyt_c_oxidase_su4_sf"/>
</dbReference>
<dbReference type="PANTHER" id="PTHR10707:SF12">
    <property type="entry name" value="CYTOCHROME C OXIDASE SUBUNIT 4 ISOFORM 1, MITOCHONDRIAL"/>
    <property type="match status" value="1"/>
</dbReference>
<dbReference type="PANTHER" id="PTHR10707">
    <property type="entry name" value="CYTOCHROME C OXIDASE SUBUNIT IV"/>
    <property type="match status" value="1"/>
</dbReference>
<dbReference type="Pfam" id="PF02936">
    <property type="entry name" value="COX4"/>
    <property type="match status" value="1"/>
</dbReference>
<dbReference type="PRINTS" id="PR01873">
    <property type="entry name" value="CYTCOXIDASE4"/>
</dbReference>
<dbReference type="SUPFAM" id="SSF81406">
    <property type="entry name" value="Mitochondrial cytochrome c oxidase subunit IV"/>
    <property type="match status" value="1"/>
</dbReference>
<organism>
    <name type="scientific">Gorilla gorilla gorilla</name>
    <name type="common">Western lowland gorilla</name>
    <dbReference type="NCBI Taxonomy" id="9595"/>
    <lineage>
        <taxon>Eukaryota</taxon>
        <taxon>Metazoa</taxon>
        <taxon>Chordata</taxon>
        <taxon>Craniata</taxon>
        <taxon>Vertebrata</taxon>
        <taxon>Euteleostomi</taxon>
        <taxon>Mammalia</taxon>
        <taxon>Eutheria</taxon>
        <taxon>Euarchontoglires</taxon>
        <taxon>Primates</taxon>
        <taxon>Haplorrhini</taxon>
        <taxon>Catarrhini</taxon>
        <taxon>Hominidae</taxon>
        <taxon>Gorilla</taxon>
    </lineage>
</organism>
<accession>O46578</accession>
<proteinExistence type="inferred from homology"/>
<protein>
    <recommendedName>
        <fullName>Cytochrome c oxidase subunit 4 isoform 1, mitochondrial</fullName>
    </recommendedName>
    <alternativeName>
        <fullName>Cytochrome c oxidase polypeptide IV</fullName>
    </alternativeName>
    <alternativeName>
        <fullName>Cytochrome c oxidase subunit IV isoform 1</fullName>
        <shortName>COX IV-1</shortName>
    </alternativeName>
</protein>
<sequence length="144" mass="16889">SVVKSEDFSLPAYMDRRDYPLPEVAHVKHLSASQKALKEKEKASWSSLSMDEKVELYRIKFKESFAEMNRGSNEWKTVVGGAMFFIGFTALVIMWQKHYVYGPLPQSFDKEWVAKQTKRMLDMKVNPIQGLASKWDYEKNEWKK</sequence>
<keyword id="KW-0007">Acetylation</keyword>
<keyword id="KW-0472">Membrane</keyword>
<keyword id="KW-0496">Mitochondrion</keyword>
<keyword id="KW-0999">Mitochondrion inner membrane</keyword>
<keyword id="KW-0597">Phosphoprotein</keyword>
<keyword id="KW-1185">Reference proteome</keyword>
<keyword id="KW-0812">Transmembrane</keyword>
<keyword id="KW-1133">Transmembrane helix</keyword>
<feature type="chain" id="PRO_0000194074" description="Cytochrome c oxidase subunit 4 isoform 1, mitochondrial">
    <location>
        <begin position="1" status="less than"/>
        <end position="144"/>
    </location>
</feature>
<feature type="topological domain" description="Mitochondrial matrix" evidence="1">
    <location>
        <begin position="1" status="less than"/>
        <end position="73"/>
    </location>
</feature>
<feature type="transmembrane region" description="Helical" evidence="1">
    <location>
        <begin position="74"/>
        <end position="99"/>
    </location>
</feature>
<feature type="topological domain" description="Mitochondrial intermembrane" evidence="1">
    <location>
        <begin position="100"/>
        <end position="144"/>
    </location>
</feature>
<feature type="modified residue" description="N6-acetyllysine; alternate" evidence="5">
    <location>
        <position position="4"/>
    </location>
</feature>
<feature type="modified residue" description="N6-succinyllysine; alternate" evidence="5">
    <location>
        <position position="4"/>
    </location>
</feature>
<feature type="modified residue" description="N6-acetyllysine" evidence="4">
    <location>
        <position position="28"/>
    </location>
</feature>
<feature type="modified residue" description="Phosphoserine" evidence="3">
    <location>
        <position position="31"/>
    </location>
</feature>
<feature type="modified residue" description="Phosphoserine" evidence="3">
    <location>
        <position position="33"/>
    </location>
</feature>
<feature type="modified residue" description="N6-acetyllysine; alternate" evidence="4">
    <location>
        <position position="35"/>
    </location>
</feature>
<feature type="modified residue" description="N6-succinyllysine; alternate" evidence="5">
    <location>
        <position position="35"/>
    </location>
</feature>
<feature type="modified residue" description="N6-acetyllysine" evidence="5">
    <location>
        <position position="42"/>
    </location>
</feature>
<feature type="non-terminal residue">
    <location>
        <position position="1"/>
    </location>
</feature>
<comment type="function">
    <text evidence="2">Component of the cytochrome c oxidase, the last enzyme in the mitochondrial electron transport chain which drives oxidative phosphorylation. The respiratory chain contains 3 multisubunit complexes succinate dehydrogenase (complex II, CII), ubiquinol-cytochrome c oxidoreductase (cytochrome b-c1 complex, complex III, CIII) and cytochrome c oxidase (complex IV, CIV), that cooperate to transfer electrons derived from NADH and succinate to molecular oxygen, creating an electrochemical gradient over the inner membrane that drives transmembrane transport and the ATP synthase. Cytochrome c oxidase is the component of the respiratory chain that catalyzes the reduction of oxygen to water. Electrons originating from reduced cytochrome c in the intermembrane space (IMS) are transferred via the dinuclear copper A center (CU(A)) of subunit 2 and heme A of subunit 1 to the active site in subunit 1, a binuclear center (BNC) formed by heme A3 and copper B (CU(B)). The BNC reduces molecular oxygen to 2 water molecules using 4 electrons from cytochrome c in the IMS and 4 protons from the mitochondrial matrix.</text>
</comment>
<comment type="pathway">
    <text evidence="2">Energy metabolism; oxidative phosphorylation.</text>
</comment>
<comment type="subunit">
    <text evidence="1 3 4 5">Component of the cytochrome c oxidase (complex IV, CIV), a multisubunit enzyme composed of 14 subunits. The complex is composed of a catalytic core of 3 subunits MT-CO1, MT-CO2 and MT-CO3, encoded in the mitochondrial DNA, and 11 supernumerary subunits COX4I, COX5A, COX5B, COX6A, COX6B, COX6C, COX7A, COX7B, COX7C, COX8 and NDUFA4, which are encoded in the nuclear genome. The complex exists as a monomer or a dimer and forms supercomplexes (SCs) in the inner mitochondrial membrane with NADH-ubiquinone oxidoreductase (complex I, CI) and ubiquinol-cytochrome c oxidoreductase (cytochrome b-c1 complex, complex III, CIII), resulting in different assemblies (supercomplex SCI(1)III(2)IV(1) and megacomplex MCI(2)III(2)IV(2)) (By similarity). Interacts with PHB2; the interaction decreases in absence of SPHK2 (By similarity). Interacts with AFG1L (By similarity). Interacts with ABCB7; this interaction allows the regulation of cellular iron homeostasis and cellular reactive oxygen species (ROS) levels in cardiomyocytes (By similarity). Interacts with FLVCR2; this interaction occurs in the absence of heme and is disrupted upon heme binding. Interacts with IRGC (By similarity).</text>
</comment>
<comment type="subcellular location">
    <subcellularLocation>
        <location evidence="1">Mitochondrion inner membrane</location>
        <topology evidence="1">Single-pass membrane protein</topology>
    </subcellularLocation>
</comment>
<comment type="similarity">
    <text evidence="6">Belongs to the cytochrome c oxidase IV family.</text>
</comment>
<name>COX41_GORGO</name>
<gene>
    <name type="primary">COX4I1</name>
    <name type="synonym">COX4</name>
</gene>
<evidence type="ECO:0000250" key="1">
    <source>
        <dbReference type="UniProtKB" id="P00423"/>
    </source>
</evidence>
<evidence type="ECO:0000250" key="2">
    <source>
        <dbReference type="UniProtKB" id="P00424"/>
    </source>
</evidence>
<evidence type="ECO:0000250" key="3">
    <source>
        <dbReference type="UniProtKB" id="P10888"/>
    </source>
</evidence>
<evidence type="ECO:0000250" key="4">
    <source>
        <dbReference type="UniProtKB" id="P13073"/>
    </source>
</evidence>
<evidence type="ECO:0000250" key="5">
    <source>
        <dbReference type="UniProtKB" id="P19783"/>
    </source>
</evidence>
<evidence type="ECO:0000305" key="6"/>
<reference key="1">
    <citation type="journal article" date="1997" name="J. Mol. Evol.">
        <title>Molecular evolution of cytochrome c oxidase subunit IV: evidence for positive selection in simian primates.</title>
        <authorList>
            <person name="Wu W."/>
            <person name="Goodman M."/>
            <person name="Lomax M.I."/>
            <person name="Grossman L.I."/>
        </authorList>
    </citation>
    <scope>NUCLEOTIDE SEQUENCE [GENOMIC DNA]</scope>
</reference>